<name>SAHH_PSEPG</name>
<proteinExistence type="inferred from homology"/>
<feature type="chain" id="PRO_1000082280" description="Adenosylhomocysteinase">
    <location>
        <begin position="1"/>
        <end position="469"/>
    </location>
</feature>
<feature type="binding site" evidence="1">
    <location>
        <position position="63"/>
    </location>
    <ligand>
        <name>substrate</name>
    </ligand>
</feature>
<feature type="binding site" evidence="1">
    <location>
        <position position="139"/>
    </location>
    <ligand>
        <name>substrate</name>
    </ligand>
</feature>
<feature type="binding site" evidence="1">
    <location>
        <position position="164"/>
    </location>
    <ligand>
        <name>substrate</name>
    </ligand>
</feature>
<feature type="binding site" evidence="1">
    <location>
        <begin position="165"/>
        <end position="167"/>
    </location>
    <ligand>
        <name>NAD(+)</name>
        <dbReference type="ChEBI" id="CHEBI:57540"/>
    </ligand>
</feature>
<feature type="binding site" evidence="1">
    <location>
        <position position="194"/>
    </location>
    <ligand>
        <name>substrate</name>
    </ligand>
</feature>
<feature type="binding site" evidence="1">
    <location>
        <position position="198"/>
    </location>
    <ligand>
        <name>substrate</name>
    </ligand>
</feature>
<feature type="binding site" evidence="1">
    <location>
        <position position="199"/>
    </location>
    <ligand>
        <name>NAD(+)</name>
        <dbReference type="ChEBI" id="CHEBI:57540"/>
    </ligand>
</feature>
<feature type="binding site" evidence="1">
    <location>
        <begin position="228"/>
        <end position="233"/>
    </location>
    <ligand>
        <name>NAD(+)</name>
        <dbReference type="ChEBI" id="CHEBI:57540"/>
    </ligand>
</feature>
<feature type="binding site" evidence="1">
    <location>
        <position position="251"/>
    </location>
    <ligand>
        <name>NAD(+)</name>
        <dbReference type="ChEBI" id="CHEBI:57540"/>
    </ligand>
</feature>
<feature type="binding site" evidence="1">
    <location>
        <position position="300"/>
    </location>
    <ligand>
        <name>NAD(+)</name>
        <dbReference type="ChEBI" id="CHEBI:57540"/>
    </ligand>
</feature>
<feature type="binding site" evidence="1">
    <location>
        <begin position="321"/>
        <end position="323"/>
    </location>
    <ligand>
        <name>NAD(+)</name>
        <dbReference type="ChEBI" id="CHEBI:57540"/>
    </ligand>
</feature>
<feature type="binding site" evidence="1">
    <location>
        <position position="375"/>
    </location>
    <ligand>
        <name>NAD(+)</name>
        <dbReference type="ChEBI" id="CHEBI:57540"/>
    </ligand>
</feature>
<reference key="1">
    <citation type="submission" date="2008-01" db="EMBL/GenBank/DDBJ databases">
        <title>Complete sequence of Pseudomonas putida GB-1.</title>
        <authorList>
            <consortium name="US DOE Joint Genome Institute"/>
            <person name="Copeland A."/>
            <person name="Lucas S."/>
            <person name="Lapidus A."/>
            <person name="Barry K."/>
            <person name="Glavina del Rio T."/>
            <person name="Dalin E."/>
            <person name="Tice H."/>
            <person name="Pitluck S."/>
            <person name="Bruce D."/>
            <person name="Goodwin L."/>
            <person name="Chertkov O."/>
            <person name="Brettin T."/>
            <person name="Detter J.C."/>
            <person name="Han C."/>
            <person name="Kuske C.R."/>
            <person name="Schmutz J."/>
            <person name="Larimer F."/>
            <person name="Land M."/>
            <person name="Hauser L."/>
            <person name="Kyrpides N."/>
            <person name="Kim E."/>
            <person name="McCarthy J.K."/>
            <person name="Richardson P."/>
        </authorList>
    </citation>
    <scope>NUCLEOTIDE SEQUENCE [LARGE SCALE GENOMIC DNA]</scope>
    <source>
        <strain>GB-1</strain>
    </source>
</reference>
<protein>
    <recommendedName>
        <fullName evidence="1">Adenosylhomocysteinase</fullName>
        <ecNumber evidence="1">3.13.2.1</ecNumber>
    </recommendedName>
    <alternativeName>
        <fullName evidence="1">S-adenosyl-L-homocysteine hydrolase</fullName>
        <shortName evidence="1">AdoHcyase</shortName>
    </alternativeName>
</protein>
<evidence type="ECO:0000255" key="1">
    <source>
        <dbReference type="HAMAP-Rule" id="MF_00563"/>
    </source>
</evidence>
<gene>
    <name evidence="1" type="primary">ahcY</name>
    <name type="ordered locus">PputGB1_5025</name>
</gene>
<organism>
    <name type="scientific">Pseudomonas putida (strain GB-1)</name>
    <dbReference type="NCBI Taxonomy" id="76869"/>
    <lineage>
        <taxon>Bacteria</taxon>
        <taxon>Pseudomonadati</taxon>
        <taxon>Pseudomonadota</taxon>
        <taxon>Gammaproteobacteria</taxon>
        <taxon>Pseudomonadales</taxon>
        <taxon>Pseudomonadaceae</taxon>
        <taxon>Pseudomonas</taxon>
    </lineage>
</organism>
<dbReference type="EC" id="3.13.2.1" evidence="1"/>
<dbReference type="EMBL" id="CP000926">
    <property type="protein sequence ID" value="ABZ00910.1"/>
    <property type="molecule type" value="Genomic_DNA"/>
</dbReference>
<dbReference type="RefSeq" id="WP_012274535.1">
    <property type="nucleotide sequence ID" value="NC_010322.1"/>
</dbReference>
<dbReference type="SMR" id="B0KM00"/>
<dbReference type="KEGG" id="ppg:PputGB1_5025"/>
<dbReference type="eggNOG" id="COG0499">
    <property type="taxonomic scope" value="Bacteria"/>
</dbReference>
<dbReference type="HOGENOM" id="CLU_025194_2_1_6"/>
<dbReference type="UniPathway" id="UPA00314">
    <property type="reaction ID" value="UER00076"/>
</dbReference>
<dbReference type="Proteomes" id="UP000002157">
    <property type="component" value="Chromosome"/>
</dbReference>
<dbReference type="GO" id="GO:0005829">
    <property type="term" value="C:cytosol"/>
    <property type="evidence" value="ECO:0007669"/>
    <property type="project" value="TreeGrafter"/>
</dbReference>
<dbReference type="GO" id="GO:0004013">
    <property type="term" value="F:adenosylhomocysteinase activity"/>
    <property type="evidence" value="ECO:0007669"/>
    <property type="project" value="UniProtKB-UniRule"/>
</dbReference>
<dbReference type="GO" id="GO:0071269">
    <property type="term" value="P:L-homocysteine biosynthetic process"/>
    <property type="evidence" value="ECO:0007669"/>
    <property type="project" value="UniProtKB-UniRule"/>
</dbReference>
<dbReference type="GO" id="GO:0006730">
    <property type="term" value="P:one-carbon metabolic process"/>
    <property type="evidence" value="ECO:0007669"/>
    <property type="project" value="UniProtKB-KW"/>
</dbReference>
<dbReference type="GO" id="GO:0033353">
    <property type="term" value="P:S-adenosylmethionine cycle"/>
    <property type="evidence" value="ECO:0007669"/>
    <property type="project" value="TreeGrafter"/>
</dbReference>
<dbReference type="CDD" id="cd00401">
    <property type="entry name" value="SAHH"/>
    <property type="match status" value="1"/>
</dbReference>
<dbReference type="FunFam" id="3.40.50.1480:FF:000006">
    <property type="entry name" value="Adenosylhomocysteinase"/>
    <property type="match status" value="1"/>
</dbReference>
<dbReference type="FunFam" id="3.40.50.1480:FF:000007">
    <property type="entry name" value="Adenosylhomocysteinase"/>
    <property type="match status" value="1"/>
</dbReference>
<dbReference type="FunFam" id="3.40.50.720:FF:000155">
    <property type="entry name" value="Adenosylhomocysteinase"/>
    <property type="match status" value="1"/>
</dbReference>
<dbReference type="Gene3D" id="3.40.50.1480">
    <property type="entry name" value="Adenosylhomocysteinase-like"/>
    <property type="match status" value="3"/>
</dbReference>
<dbReference type="Gene3D" id="3.40.50.720">
    <property type="entry name" value="NAD(P)-binding Rossmann-like Domain"/>
    <property type="match status" value="1"/>
</dbReference>
<dbReference type="HAMAP" id="MF_00563">
    <property type="entry name" value="AdoHcyase"/>
    <property type="match status" value="1"/>
</dbReference>
<dbReference type="InterPro" id="IPR042172">
    <property type="entry name" value="Adenosylhomocyst_ase-like_sf"/>
</dbReference>
<dbReference type="InterPro" id="IPR000043">
    <property type="entry name" value="Adenosylhomocysteinase-like"/>
</dbReference>
<dbReference type="InterPro" id="IPR015878">
    <property type="entry name" value="Ado_hCys_hydrolase_NAD-bd"/>
</dbReference>
<dbReference type="InterPro" id="IPR036291">
    <property type="entry name" value="NAD(P)-bd_dom_sf"/>
</dbReference>
<dbReference type="InterPro" id="IPR020082">
    <property type="entry name" value="S-Ado-L-homoCys_hydrolase_CS"/>
</dbReference>
<dbReference type="NCBIfam" id="TIGR00936">
    <property type="entry name" value="ahcY"/>
    <property type="match status" value="1"/>
</dbReference>
<dbReference type="NCBIfam" id="NF004005">
    <property type="entry name" value="PRK05476.2-3"/>
    <property type="match status" value="1"/>
</dbReference>
<dbReference type="PANTHER" id="PTHR23420">
    <property type="entry name" value="ADENOSYLHOMOCYSTEINASE"/>
    <property type="match status" value="1"/>
</dbReference>
<dbReference type="PANTHER" id="PTHR23420:SF0">
    <property type="entry name" value="ADENOSYLHOMOCYSTEINASE"/>
    <property type="match status" value="1"/>
</dbReference>
<dbReference type="Pfam" id="PF05221">
    <property type="entry name" value="AdoHcyase"/>
    <property type="match status" value="1"/>
</dbReference>
<dbReference type="Pfam" id="PF00670">
    <property type="entry name" value="AdoHcyase_NAD"/>
    <property type="match status" value="1"/>
</dbReference>
<dbReference type="PIRSF" id="PIRSF001109">
    <property type="entry name" value="Ad_hcy_hydrolase"/>
    <property type="match status" value="1"/>
</dbReference>
<dbReference type="SMART" id="SM00996">
    <property type="entry name" value="AdoHcyase"/>
    <property type="match status" value="1"/>
</dbReference>
<dbReference type="SMART" id="SM00997">
    <property type="entry name" value="AdoHcyase_NAD"/>
    <property type="match status" value="1"/>
</dbReference>
<dbReference type="SUPFAM" id="SSF52283">
    <property type="entry name" value="Formate/glycerate dehydrogenase catalytic domain-like"/>
    <property type="match status" value="1"/>
</dbReference>
<dbReference type="SUPFAM" id="SSF51735">
    <property type="entry name" value="NAD(P)-binding Rossmann-fold domains"/>
    <property type="match status" value="1"/>
</dbReference>
<dbReference type="PROSITE" id="PS00738">
    <property type="entry name" value="ADOHCYASE_1"/>
    <property type="match status" value="1"/>
</dbReference>
<dbReference type="PROSITE" id="PS00739">
    <property type="entry name" value="ADOHCYASE_2"/>
    <property type="match status" value="1"/>
</dbReference>
<accession>B0KM00</accession>
<keyword id="KW-0963">Cytoplasm</keyword>
<keyword id="KW-0378">Hydrolase</keyword>
<keyword id="KW-0520">NAD</keyword>
<keyword id="KW-0554">One-carbon metabolism</keyword>
<comment type="function">
    <text evidence="1">May play a key role in the regulation of the intracellular concentration of adenosylhomocysteine.</text>
</comment>
<comment type="catalytic activity">
    <reaction evidence="1">
        <text>S-adenosyl-L-homocysteine + H2O = L-homocysteine + adenosine</text>
        <dbReference type="Rhea" id="RHEA:21708"/>
        <dbReference type="ChEBI" id="CHEBI:15377"/>
        <dbReference type="ChEBI" id="CHEBI:16335"/>
        <dbReference type="ChEBI" id="CHEBI:57856"/>
        <dbReference type="ChEBI" id="CHEBI:58199"/>
        <dbReference type="EC" id="3.13.2.1"/>
    </reaction>
</comment>
<comment type="cofactor">
    <cofactor evidence="1">
        <name>NAD(+)</name>
        <dbReference type="ChEBI" id="CHEBI:57540"/>
    </cofactor>
    <text evidence="1">Binds 1 NAD(+) per subunit.</text>
</comment>
<comment type="pathway">
    <text evidence="1">Amino-acid biosynthesis; L-homocysteine biosynthesis; L-homocysteine from S-adenosyl-L-homocysteine: step 1/1.</text>
</comment>
<comment type="subcellular location">
    <subcellularLocation>
        <location evidence="1">Cytoplasm</location>
    </subcellularLocation>
</comment>
<comment type="similarity">
    <text evidence="1">Belongs to the adenosylhomocysteinase family.</text>
</comment>
<sequence>MSAANMPAGFTDYKVADISLAAWGRRETIIAESEMPALMGLRRKYLTEQPLKGAKILGCIHMTIQTAVLIETLVALGAEVRWSSCNIFSTQDQAAASIAAAGIPVFAWKGETEEEYEWCLEQTILKDGQPWDANMILDDGGDLTELLHKKYPQVLDRVHGVTEETTTGVHRLLDMLAKGELKVPAINVNDSVTKSKNDNKYGCRHSLNDAIKRGTDHLLSGKQALVIGYGDVGKGSAQSLRQEGMIVKVTEVDPICAMQACMDGFELVSPFIDGINDGTEASIDKALLGKIDLIVTTTGNVNVCDANMLKALKKRAVVCNIGHFDNEIDTAFMRKNWAWEEVKPQVHKIHRTGAGSFDPQNDDYLILLAEGRLVNLGNATGHPSRIMDGSFANQVLAQIFLFEQKYADLSAEKKAERLTVEVLPKKLDEEVALEMVRGFGGVVTKLTKQQADYIGVTVEGPFKPHAYRY</sequence>